<sequence length="152" mass="15235">MVKAVAVLSSSEGVSGTIFFTQDGDAPTTVTGNVSGLKPGLHGFHVHALGDTTNGCMSTGPHYNPAGKEHGAPEDEVRHAGDLGNITVGEDGTASFTLTDKQIPLAGPQSIIGRAVVVHADPDDLGKGGHELSKTTGNAGGRVACGIIGLQG</sequence>
<name>SODC_NICPL</name>
<keyword id="KW-0049">Antioxidant</keyword>
<keyword id="KW-0186">Copper</keyword>
<keyword id="KW-0963">Cytoplasm</keyword>
<keyword id="KW-1015">Disulfide bond</keyword>
<keyword id="KW-0479">Metal-binding</keyword>
<keyword id="KW-0560">Oxidoreductase</keyword>
<keyword id="KW-0862">Zinc</keyword>
<protein>
    <recommendedName>
        <fullName>Superoxide dismutase [Cu-Zn]</fullName>
        <ecNumber>1.15.1.1</ecNumber>
    </recommendedName>
</protein>
<comment type="function">
    <text>Destroys radicals which are normally produced within the cells and which are toxic to biological systems.</text>
</comment>
<comment type="catalytic activity">
    <reaction>
        <text>2 superoxide + 2 H(+) = H2O2 + O2</text>
        <dbReference type="Rhea" id="RHEA:20696"/>
        <dbReference type="ChEBI" id="CHEBI:15378"/>
        <dbReference type="ChEBI" id="CHEBI:15379"/>
        <dbReference type="ChEBI" id="CHEBI:16240"/>
        <dbReference type="ChEBI" id="CHEBI:18421"/>
        <dbReference type="EC" id="1.15.1.1"/>
    </reaction>
</comment>
<comment type="cofactor">
    <cofactor evidence="1">
        <name>Cu cation</name>
        <dbReference type="ChEBI" id="CHEBI:23378"/>
    </cofactor>
    <text evidence="1">Binds 1 copper ion per subunit.</text>
</comment>
<comment type="cofactor">
    <cofactor evidence="1">
        <name>Zn(2+)</name>
        <dbReference type="ChEBI" id="CHEBI:29105"/>
    </cofactor>
    <text evidence="1">Binds 1 zinc ion per subunit.</text>
</comment>
<comment type="subunit">
    <text>Homodimer.</text>
</comment>
<comment type="subcellular location">
    <subcellularLocation>
        <location>Cytoplasm</location>
    </subcellularLocation>
</comment>
<comment type="induction">
    <text>By sulfhydryl-containing molecules such as glutathione, DDT, and cysteine.</text>
</comment>
<comment type="similarity">
    <text evidence="2">Belongs to the Cu-Zn superoxide dismutase family.</text>
</comment>
<feature type="initiator methionine" description="Removed" evidence="1">
    <location>
        <position position="1"/>
    </location>
</feature>
<feature type="chain" id="PRO_0000164146" description="Superoxide dismutase [Cu-Zn]">
    <location>
        <begin position="2"/>
        <end position="152"/>
    </location>
</feature>
<feature type="binding site" evidence="1">
    <location>
        <position position="45"/>
    </location>
    <ligand>
        <name>Cu cation</name>
        <dbReference type="ChEBI" id="CHEBI:23378"/>
        <note>catalytic</note>
    </ligand>
</feature>
<feature type="binding site" evidence="1">
    <location>
        <position position="47"/>
    </location>
    <ligand>
        <name>Cu cation</name>
        <dbReference type="ChEBI" id="CHEBI:23378"/>
        <note>catalytic</note>
    </ligand>
</feature>
<feature type="binding site" evidence="1">
    <location>
        <position position="62"/>
    </location>
    <ligand>
        <name>Cu cation</name>
        <dbReference type="ChEBI" id="CHEBI:23378"/>
        <note>catalytic</note>
    </ligand>
</feature>
<feature type="binding site" evidence="1">
    <location>
        <position position="62"/>
    </location>
    <ligand>
        <name>Zn(2+)</name>
        <dbReference type="ChEBI" id="CHEBI:29105"/>
        <note>structural</note>
    </ligand>
</feature>
<feature type="binding site" evidence="1">
    <location>
        <position position="70"/>
    </location>
    <ligand>
        <name>Zn(2+)</name>
        <dbReference type="ChEBI" id="CHEBI:29105"/>
        <note>structural</note>
    </ligand>
</feature>
<feature type="binding site" evidence="1">
    <location>
        <position position="79"/>
    </location>
    <ligand>
        <name>Zn(2+)</name>
        <dbReference type="ChEBI" id="CHEBI:29105"/>
        <note>structural</note>
    </ligand>
</feature>
<feature type="binding site" evidence="1">
    <location>
        <position position="82"/>
    </location>
    <ligand>
        <name>Zn(2+)</name>
        <dbReference type="ChEBI" id="CHEBI:29105"/>
        <note>structural</note>
    </ligand>
</feature>
<feature type="binding site" evidence="1">
    <location>
        <position position="119"/>
    </location>
    <ligand>
        <name>Cu cation</name>
        <dbReference type="ChEBI" id="CHEBI:23378"/>
        <note>catalytic</note>
    </ligand>
</feature>
<feature type="disulfide bond" evidence="1">
    <location>
        <begin position="56"/>
        <end position="145"/>
    </location>
</feature>
<gene>
    <name type="primary">SODCC</name>
</gene>
<proteinExistence type="evidence at transcript level"/>
<organism>
    <name type="scientific">Nicotiana plumbaginifolia</name>
    <name type="common">Leadwort-leaved tobacco</name>
    <name type="synonym">Tex-Mex tobacco</name>
    <dbReference type="NCBI Taxonomy" id="4092"/>
    <lineage>
        <taxon>Eukaryota</taxon>
        <taxon>Viridiplantae</taxon>
        <taxon>Streptophyta</taxon>
        <taxon>Embryophyta</taxon>
        <taxon>Tracheophyta</taxon>
        <taxon>Spermatophyta</taxon>
        <taxon>Magnoliopsida</taxon>
        <taxon>eudicotyledons</taxon>
        <taxon>Gunneridae</taxon>
        <taxon>Pentapetalae</taxon>
        <taxon>asterids</taxon>
        <taxon>lamiids</taxon>
        <taxon>Solanales</taxon>
        <taxon>Solanaceae</taxon>
        <taxon>Nicotianoideae</taxon>
        <taxon>Nicotianeae</taxon>
        <taxon>Nicotiana</taxon>
    </lineage>
</organism>
<evidence type="ECO:0000250" key="1"/>
<evidence type="ECO:0000305" key="2"/>
<dbReference type="EC" id="1.15.1.1"/>
<dbReference type="EMBL" id="X55974">
    <property type="protein sequence ID" value="CAA39444.1"/>
    <property type="molecule type" value="mRNA"/>
</dbReference>
<dbReference type="EMBL" id="L08253">
    <property type="protein sequence ID" value="AAA34058.1"/>
    <property type="molecule type" value="Genomic_DNA"/>
</dbReference>
<dbReference type="PIR" id="JQ1334">
    <property type="entry name" value="JQ1334"/>
</dbReference>
<dbReference type="SMR" id="P27082"/>
<dbReference type="BRENDA" id="1.15.1.1">
    <property type="organism ID" value="3640"/>
</dbReference>
<dbReference type="GO" id="GO:0005737">
    <property type="term" value="C:cytoplasm"/>
    <property type="evidence" value="ECO:0007669"/>
    <property type="project" value="UniProtKB-SubCell"/>
</dbReference>
<dbReference type="GO" id="GO:0005507">
    <property type="term" value="F:copper ion binding"/>
    <property type="evidence" value="ECO:0007669"/>
    <property type="project" value="InterPro"/>
</dbReference>
<dbReference type="GO" id="GO:0004784">
    <property type="term" value="F:superoxide dismutase activity"/>
    <property type="evidence" value="ECO:0007669"/>
    <property type="project" value="UniProtKB-EC"/>
</dbReference>
<dbReference type="CDD" id="cd00305">
    <property type="entry name" value="Cu-Zn_Superoxide_Dismutase"/>
    <property type="match status" value="1"/>
</dbReference>
<dbReference type="FunFam" id="2.60.40.200:FF:000001">
    <property type="entry name" value="Superoxide dismutase [Cu-Zn]"/>
    <property type="match status" value="1"/>
</dbReference>
<dbReference type="Gene3D" id="2.60.40.200">
    <property type="entry name" value="Superoxide dismutase, copper/zinc binding domain"/>
    <property type="match status" value="1"/>
</dbReference>
<dbReference type="InterPro" id="IPR036423">
    <property type="entry name" value="SOD-like_Cu/Zn_dom_sf"/>
</dbReference>
<dbReference type="InterPro" id="IPR024134">
    <property type="entry name" value="SOD_Cu/Zn_/chaperone"/>
</dbReference>
<dbReference type="InterPro" id="IPR018152">
    <property type="entry name" value="SOD_Cu/Zn_BS"/>
</dbReference>
<dbReference type="InterPro" id="IPR001424">
    <property type="entry name" value="SOD_Cu_Zn_dom"/>
</dbReference>
<dbReference type="PANTHER" id="PTHR10003">
    <property type="entry name" value="SUPEROXIDE DISMUTASE CU-ZN -RELATED"/>
    <property type="match status" value="1"/>
</dbReference>
<dbReference type="Pfam" id="PF00080">
    <property type="entry name" value="Sod_Cu"/>
    <property type="match status" value="1"/>
</dbReference>
<dbReference type="PRINTS" id="PR00068">
    <property type="entry name" value="CUZNDISMTASE"/>
</dbReference>
<dbReference type="SUPFAM" id="SSF49329">
    <property type="entry name" value="Cu,Zn superoxide dismutase-like"/>
    <property type="match status" value="1"/>
</dbReference>
<dbReference type="PROSITE" id="PS00087">
    <property type="entry name" value="SOD_CU_ZN_1"/>
    <property type="match status" value="1"/>
</dbReference>
<dbReference type="PROSITE" id="PS00332">
    <property type="entry name" value="SOD_CU_ZN_2"/>
    <property type="match status" value="1"/>
</dbReference>
<reference key="1">
    <citation type="journal article" date="1991" name="Plant Cell">
        <title>Differential regulation of superoxide dismutases in plants exposed to environmental stress.</title>
        <authorList>
            <person name="Tsang E.W.T."/>
            <person name="Bowler C."/>
            <person name="Herouart D."/>
            <person name="van Camp W."/>
            <person name="Villarroel R."/>
            <person name="Genetello C."/>
            <person name="van Montagu M."/>
            <person name="Inze D."/>
        </authorList>
    </citation>
    <scope>NUCLEOTIDE SEQUENCE [MRNA]</scope>
</reference>
<reference key="2">
    <citation type="journal article" date="1993" name="Proc. Natl. Acad. Sci. U.S.A.">
        <title>Redox-activated expression of the cytosolic copper/zinc superoxide dismutase gene in Nicotiana.</title>
        <authorList>
            <person name="Herouart D.M."/>
            <person name="van Montagu M.M."/>
            <person name="Inze D.M."/>
        </authorList>
    </citation>
    <scope>NUCLEOTIDE SEQUENCE [GENOMIC DNA] OF 1-58</scope>
</reference>
<accession>P27082</accession>